<accession>C5BSJ7</accession>
<proteinExistence type="inferred from homology"/>
<reference key="1">
    <citation type="journal article" date="2009" name="PLoS ONE">
        <title>The complete genome of Teredinibacter turnerae T7901: an intracellular endosymbiont of marine wood-boring bivalves (shipworms).</title>
        <authorList>
            <person name="Yang J.C."/>
            <person name="Madupu R."/>
            <person name="Durkin A.S."/>
            <person name="Ekborg N.A."/>
            <person name="Pedamallu C.S."/>
            <person name="Hostetler J.B."/>
            <person name="Radune D."/>
            <person name="Toms B.S."/>
            <person name="Henrissat B."/>
            <person name="Coutinho P.M."/>
            <person name="Schwarz S."/>
            <person name="Field L."/>
            <person name="Trindade-Silva A.E."/>
            <person name="Soares C.A.G."/>
            <person name="Elshahawi S."/>
            <person name="Hanora A."/>
            <person name="Schmidt E.W."/>
            <person name="Haygood M.G."/>
            <person name="Posfai J."/>
            <person name="Benner J."/>
            <person name="Madinger C."/>
            <person name="Nove J."/>
            <person name="Anton B."/>
            <person name="Chaudhary K."/>
            <person name="Foster J."/>
            <person name="Holman A."/>
            <person name="Kumar S."/>
            <person name="Lessard P.A."/>
            <person name="Luyten Y.A."/>
            <person name="Slatko B."/>
            <person name="Wood N."/>
            <person name="Wu B."/>
            <person name="Teplitski M."/>
            <person name="Mougous J.D."/>
            <person name="Ward N."/>
            <person name="Eisen J.A."/>
            <person name="Badger J.H."/>
            <person name="Distel D.L."/>
        </authorList>
    </citation>
    <scope>NUCLEOTIDE SEQUENCE [LARGE SCALE GENOMIC DNA]</scope>
    <source>
        <strain>ATCC 39867 / T7901</strain>
    </source>
</reference>
<name>PYRF_TERTT</name>
<protein>
    <recommendedName>
        <fullName evidence="1">Orotidine 5'-phosphate decarboxylase</fullName>
        <ecNumber evidence="1">4.1.1.23</ecNumber>
    </recommendedName>
    <alternativeName>
        <fullName evidence="1">OMP decarboxylase</fullName>
        <shortName evidence="1">OMPDCase</shortName>
        <shortName evidence="1">OMPdecase</shortName>
    </alternativeName>
</protein>
<feature type="chain" id="PRO_1000213827" description="Orotidine 5'-phosphate decarboxylase">
    <location>
        <begin position="1"/>
        <end position="232"/>
    </location>
</feature>
<feature type="active site" description="Proton donor" evidence="1">
    <location>
        <position position="64"/>
    </location>
</feature>
<feature type="binding site" evidence="1">
    <location>
        <position position="13"/>
    </location>
    <ligand>
        <name>substrate</name>
    </ligand>
</feature>
<feature type="binding site" evidence="1">
    <location>
        <position position="35"/>
    </location>
    <ligand>
        <name>substrate</name>
    </ligand>
</feature>
<feature type="binding site" evidence="1">
    <location>
        <begin position="62"/>
        <end position="71"/>
    </location>
    <ligand>
        <name>substrate</name>
    </ligand>
</feature>
<feature type="binding site" evidence="1">
    <location>
        <position position="121"/>
    </location>
    <ligand>
        <name>substrate</name>
    </ligand>
</feature>
<feature type="binding site" evidence="1">
    <location>
        <position position="182"/>
    </location>
    <ligand>
        <name>substrate</name>
    </ligand>
</feature>
<feature type="binding site" evidence="1">
    <location>
        <position position="191"/>
    </location>
    <ligand>
        <name>substrate</name>
    </ligand>
</feature>
<feature type="binding site" evidence="1">
    <location>
        <position position="211"/>
    </location>
    <ligand>
        <name>substrate</name>
    </ligand>
</feature>
<feature type="binding site" evidence="1">
    <location>
        <position position="212"/>
    </location>
    <ligand>
        <name>substrate</name>
    </ligand>
</feature>
<keyword id="KW-0210">Decarboxylase</keyword>
<keyword id="KW-0456">Lyase</keyword>
<keyword id="KW-0665">Pyrimidine biosynthesis</keyword>
<keyword id="KW-1185">Reference proteome</keyword>
<dbReference type="EC" id="4.1.1.23" evidence="1"/>
<dbReference type="EMBL" id="CP001614">
    <property type="protein sequence ID" value="ACR14352.1"/>
    <property type="molecule type" value="Genomic_DNA"/>
</dbReference>
<dbReference type="RefSeq" id="WP_015820467.1">
    <property type="nucleotide sequence ID" value="NC_012997.1"/>
</dbReference>
<dbReference type="SMR" id="C5BSJ7"/>
<dbReference type="STRING" id="377629.TERTU_1389"/>
<dbReference type="KEGG" id="ttu:TERTU_1389"/>
<dbReference type="eggNOG" id="COG0284">
    <property type="taxonomic scope" value="Bacteria"/>
</dbReference>
<dbReference type="HOGENOM" id="CLU_067069_0_0_6"/>
<dbReference type="OrthoDB" id="9806203at2"/>
<dbReference type="UniPathway" id="UPA00070">
    <property type="reaction ID" value="UER00120"/>
</dbReference>
<dbReference type="Proteomes" id="UP000009080">
    <property type="component" value="Chromosome"/>
</dbReference>
<dbReference type="GO" id="GO:0005829">
    <property type="term" value="C:cytosol"/>
    <property type="evidence" value="ECO:0007669"/>
    <property type="project" value="TreeGrafter"/>
</dbReference>
<dbReference type="GO" id="GO:0004590">
    <property type="term" value="F:orotidine-5'-phosphate decarboxylase activity"/>
    <property type="evidence" value="ECO:0007669"/>
    <property type="project" value="UniProtKB-UniRule"/>
</dbReference>
<dbReference type="GO" id="GO:0006207">
    <property type="term" value="P:'de novo' pyrimidine nucleobase biosynthetic process"/>
    <property type="evidence" value="ECO:0007669"/>
    <property type="project" value="InterPro"/>
</dbReference>
<dbReference type="GO" id="GO:0044205">
    <property type="term" value="P:'de novo' UMP biosynthetic process"/>
    <property type="evidence" value="ECO:0007669"/>
    <property type="project" value="UniProtKB-UniRule"/>
</dbReference>
<dbReference type="CDD" id="cd04725">
    <property type="entry name" value="OMP_decarboxylase_like"/>
    <property type="match status" value="1"/>
</dbReference>
<dbReference type="FunFam" id="3.20.20.70:FF:000015">
    <property type="entry name" value="Orotidine 5'-phosphate decarboxylase"/>
    <property type="match status" value="1"/>
</dbReference>
<dbReference type="Gene3D" id="3.20.20.70">
    <property type="entry name" value="Aldolase class I"/>
    <property type="match status" value="1"/>
</dbReference>
<dbReference type="HAMAP" id="MF_01200_B">
    <property type="entry name" value="OMPdecase_type1_B"/>
    <property type="match status" value="1"/>
</dbReference>
<dbReference type="InterPro" id="IPR013785">
    <property type="entry name" value="Aldolase_TIM"/>
</dbReference>
<dbReference type="InterPro" id="IPR014732">
    <property type="entry name" value="OMPdecase"/>
</dbReference>
<dbReference type="InterPro" id="IPR018089">
    <property type="entry name" value="OMPdecase_AS"/>
</dbReference>
<dbReference type="InterPro" id="IPR047596">
    <property type="entry name" value="OMPdecase_bac"/>
</dbReference>
<dbReference type="InterPro" id="IPR001754">
    <property type="entry name" value="OMPdeCOase_dom"/>
</dbReference>
<dbReference type="InterPro" id="IPR011060">
    <property type="entry name" value="RibuloseP-bd_barrel"/>
</dbReference>
<dbReference type="NCBIfam" id="NF001273">
    <property type="entry name" value="PRK00230.1"/>
    <property type="match status" value="1"/>
</dbReference>
<dbReference type="NCBIfam" id="TIGR01740">
    <property type="entry name" value="pyrF"/>
    <property type="match status" value="1"/>
</dbReference>
<dbReference type="PANTHER" id="PTHR32119">
    <property type="entry name" value="OROTIDINE 5'-PHOSPHATE DECARBOXYLASE"/>
    <property type="match status" value="1"/>
</dbReference>
<dbReference type="PANTHER" id="PTHR32119:SF2">
    <property type="entry name" value="OROTIDINE 5'-PHOSPHATE DECARBOXYLASE"/>
    <property type="match status" value="1"/>
</dbReference>
<dbReference type="Pfam" id="PF00215">
    <property type="entry name" value="OMPdecase"/>
    <property type="match status" value="1"/>
</dbReference>
<dbReference type="SMART" id="SM00934">
    <property type="entry name" value="OMPdecase"/>
    <property type="match status" value="1"/>
</dbReference>
<dbReference type="SUPFAM" id="SSF51366">
    <property type="entry name" value="Ribulose-phoshate binding barrel"/>
    <property type="match status" value="1"/>
</dbReference>
<dbReference type="PROSITE" id="PS00156">
    <property type="entry name" value="OMPDECASE"/>
    <property type="match status" value="1"/>
</dbReference>
<sequence>MSVTGPQLLVAMDFNDINDCLALACQLDPQSCRLKIGKELFTTAGPAVVESVQKLGFDVFLDLKFHDIPNTVAGAVKAAANMGVWMVNVHASGGQRMMEAARESLVLFSHKPLLIAVTVLTSMDQSDLNGIGITESPEAMVARLASLAKLSGMDGVVCSALEAGAMKVQQGADFLTITPGIRPASTEAGDQRRVVTPEQAIANGSDFIVVGRPITQAEDPAAACAQIVNSIQ</sequence>
<organism>
    <name type="scientific">Teredinibacter turnerae (strain ATCC 39867 / T7901)</name>
    <dbReference type="NCBI Taxonomy" id="377629"/>
    <lineage>
        <taxon>Bacteria</taxon>
        <taxon>Pseudomonadati</taxon>
        <taxon>Pseudomonadota</taxon>
        <taxon>Gammaproteobacteria</taxon>
        <taxon>Cellvibrionales</taxon>
        <taxon>Cellvibrionaceae</taxon>
        <taxon>Teredinibacter</taxon>
    </lineage>
</organism>
<comment type="function">
    <text evidence="1">Catalyzes the decarboxylation of orotidine 5'-monophosphate (OMP) to uridine 5'-monophosphate (UMP).</text>
</comment>
<comment type="catalytic activity">
    <reaction evidence="1">
        <text>orotidine 5'-phosphate + H(+) = UMP + CO2</text>
        <dbReference type="Rhea" id="RHEA:11596"/>
        <dbReference type="ChEBI" id="CHEBI:15378"/>
        <dbReference type="ChEBI" id="CHEBI:16526"/>
        <dbReference type="ChEBI" id="CHEBI:57538"/>
        <dbReference type="ChEBI" id="CHEBI:57865"/>
        <dbReference type="EC" id="4.1.1.23"/>
    </reaction>
</comment>
<comment type="pathway">
    <text evidence="1">Pyrimidine metabolism; UMP biosynthesis via de novo pathway; UMP from orotate: step 2/2.</text>
</comment>
<comment type="subunit">
    <text evidence="1">Homodimer.</text>
</comment>
<comment type="similarity">
    <text evidence="1">Belongs to the OMP decarboxylase family. Type 1 subfamily.</text>
</comment>
<evidence type="ECO:0000255" key="1">
    <source>
        <dbReference type="HAMAP-Rule" id="MF_01200"/>
    </source>
</evidence>
<gene>
    <name evidence="1" type="primary">pyrF</name>
    <name type="ordered locus">TERTU_1389</name>
</gene>